<accession>Q57S31</accession>
<dbReference type="EC" id="3.6.1.54" evidence="1"/>
<dbReference type="EMBL" id="AE017220">
    <property type="protein sequence ID" value="AAX64480.1"/>
    <property type="molecule type" value="Genomic_DNA"/>
</dbReference>
<dbReference type="RefSeq" id="WP_000212287.1">
    <property type="nucleotide sequence ID" value="NC_006905.1"/>
</dbReference>
<dbReference type="SMR" id="Q57S31"/>
<dbReference type="KEGG" id="sec:SCH_0574"/>
<dbReference type="HOGENOM" id="CLU_074586_0_0_6"/>
<dbReference type="UniPathway" id="UPA00359">
    <property type="reaction ID" value="UER00480"/>
</dbReference>
<dbReference type="Proteomes" id="UP000000538">
    <property type="component" value="Chromosome"/>
</dbReference>
<dbReference type="GO" id="GO:0005737">
    <property type="term" value="C:cytoplasm"/>
    <property type="evidence" value="ECO:0007669"/>
    <property type="project" value="InterPro"/>
</dbReference>
<dbReference type="GO" id="GO:0019897">
    <property type="term" value="C:extrinsic component of plasma membrane"/>
    <property type="evidence" value="ECO:0007669"/>
    <property type="project" value="UniProtKB-UniRule"/>
</dbReference>
<dbReference type="GO" id="GO:0030145">
    <property type="term" value="F:manganese ion binding"/>
    <property type="evidence" value="ECO:0007669"/>
    <property type="project" value="UniProtKB-UniRule"/>
</dbReference>
<dbReference type="GO" id="GO:0008758">
    <property type="term" value="F:UDP-2,3-diacylglucosamine hydrolase activity"/>
    <property type="evidence" value="ECO:0007669"/>
    <property type="project" value="UniProtKB-UniRule"/>
</dbReference>
<dbReference type="GO" id="GO:0009245">
    <property type="term" value="P:lipid A biosynthetic process"/>
    <property type="evidence" value="ECO:0007669"/>
    <property type="project" value="UniProtKB-UniRule"/>
</dbReference>
<dbReference type="CDD" id="cd07398">
    <property type="entry name" value="MPP_YbbF-LpxH"/>
    <property type="match status" value="1"/>
</dbReference>
<dbReference type="FunFam" id="3.60.21.10:FF:000012">
    <property type="entry name" value="UDP-2,3-diacylglucosamine hydrolase"/>
    <property type="match status" value="1"/>
</dbReference>
<dbReference type="Gene3D" id="3.60.21.10">
    <property type="match status" value="1"/>
</dbReference>
<dbReference type="HAMAP" id="MF_00575">
    <property type="entry name" value="LpxH"/>
    <property type="match status" value="1"/>
</dbReference>
<dbReference type="InterPro" id="IPR004843">
    <property type="entry name" value="Calcineurin-like_PHP_ApaH"/>
</dbReference>
<dbReference type="InterPro" id="IPR043461">
    <property type="entry name" value="LpxH-like"/>
</dbReference>
<dbReference type="InterPro" id="IPR029052">
    <property type="entry name" value="Metallo-depent_PP-like"/>
</dbReference>
<dbReference type="InterPro" id="IPR010138">
    <property type="entry name" value="UDP-diacylglucosamine_Hdrlase"/>
</dbReference>
<dbReference type="NCBIfam" id="TIGR01854">
    <property type="entry name" value="lipid_A_lpxH"/>
    <property type="match status" value="1"/>
</dbReference>
<dbReference type="NCBIfam" id="NF003743">
    <property type="entry name" value="PRK05340.1"/>
    <property type="match status" value="1"/>
</dbReference>
<dbReference type="PANTHER" id="PTHR34990:SF1">
    <property type="entry name" value="UDP-2,3-DIACYLGLUCOSAMINE HYDROLASE"/>
    <property type="match status" value="1"/>
</dbReference>
<dbReference type="PANTHER" id="PTHR34990">
    <property type="entry name" value="UDP-2,3-DIACYLGLUCOSAMINE HYDROLASE-RELATED"/>
    <property type="match status" value="1"/>
</dbReference>
<dbReference type="Pfam" id="PF00149">
    <property type="entry name" value="Metallophos"/>
    <property type="match status" value="1"/>
</dbReference>
<dbReference type="SUPFAM" id="SSF56300">
    <property type="entry name" value="Metallo-dependent phosphatases"/>
    <property type="match status" value="1"/>
</dbReference>
<evidence type="ECO:0000255" key="1">
    <source>
        <dbReference type="HAMAP-Rule" id="MF_00575"/>
    </source>
</evidence>
<gene>
    <name evidence="1" type="primary">lpxH</name>
    <name type="ordered locus">SCH_0574</name>
</gene>
<protein>
    <recommendedName>
        <fullName evidence="1">UDP-2,3-diacylglucosamine hydrolase</fullName>
        <ecNumber evidence="1">3.6.1.54</ecNumber>
    </recommendedName>
    <alternativeName>
        <fullName evidence="1">UDP-2,3-diacylglucosamine diphosphatase</fullName>
    </alternativeName>
</protein>
<proteinExistence type="inferred from homology"/>
<name>LPXH_SALCH</name>
<reference key="1">
    <citation type="journal article" date="2005" name="Nucleic Acids Res.">
        <title>The genome sequence of Salmonella enterica serovar Choleraesuis, a highly invasive and resistant zoonotic pathogen.</title>
        <authorList>
            <person name="Chiu C.-H."/>
            <person name="Tang P."/>
            <person name="Chu C."/>
            <person name="Hu S."/>
            <person name="Bao Q."/>
            <person name="Yu J."/>
            <person name="Chou Y.-Y."/>
            <person name="Wang H.-S."/>
            <person name="Lee Y.-S."/>
        </authorList>
    </citation>
    <scope>NUCLEOTIDE SEQUENCE [LARGE SCALE GENOMIC DNA]</scope>
    <source>
        <strain>SC-B67</strain>
    </source>
</reference>
<comment type="function">
    <text evidence="1">Hydrolyzes the pyrophosphate bond of UDP-2,3-diacylglucosamine to yield 2,3-diacylglucosamine 1-phosphate (lipid X) and UMP by catalyzing the attack of water at the alpha-P atom. Involved in the biosynthesis of lipid A, a phosphorylated glycolipid that anchors the lipopolysaccharide to the outer membrane of the cell.</text>
</comment>
<comment type="catalytic activity">
    <reaction evidence="1">
        <text>UDP-2-N,3-O-bis[(3R)-3-hydroxytetradecanoyl]-alpha-D-glucosamine + H2O = 2-N,3-O-bis[(3R)-3-hydroxytetradecanoyl]-alpha-D-glucosaminyl 1-phosphate + UMP + 2 H(+)</text>
        <dbReference type="Rhea" id="RHEA:25213"/>
        <dbReference type="ChEBI" id="CHEBI:15377"/>
        <dbReference type="ChEBI" id="CHEBI:15378"/>
        <dbReference type="ChEBI" id="CHEBI:57865"/>
        <dbReference type="ChEBI" id="CHEBI:57957"/>
        <dbReference type="ChEBI" id="CHEBI:78847"/>
        <dbReference type="EC" id="3.6.1.54"/>
    </reaction>
</comment>
<comment type="cofactor">
    <cofactor evidence="1">
        <name>Mn(2+)</name>
        <dbReference type="ChEBI" id="CHEBI:29035"/>
    </cofactor>
    <text evidence="1">Binds 2 Mn(2+) ions per subunit in a binuclear metal center.</text>
</comment>
<comment type="pathway">
    <text evidence="1">Glycolipid biosynthesis; lipid IV(A) biosynthesis; lipid IV(A) from (3R)-3-hydroxytetradecanoyl-[acyl-carrier-protein] and UDP-N-acetyl-alpha-D-glucosamine: step 4/6.</text>
</comment>
<comment type="subcellular location">
    <subcellularLocation>
        <location evidence="1">Cell inner membrane</location>
        <topology evidence="1">Peripheral membrane protein</topology>
        <orientation evidence="1">Cytoplasmic side</orientation>
    </subcellularLocation>
</comment>
<comment type="similarity">
    <text evidence="1">Belongs to the LpxH family.</text>
</comment>
<feature type="chain" id="PRO_1000025078" description="UDP-2,3-diacylglucosamine hydrolase">
    <location>
        <begin position="1"/>
        <end position="240"/>
    </location>
</feature>
<feature type="binding site" evidence="1">
    <location>
        <position position="8"/>
    </location>
    <ligand>
        <name>Mn(2+)</name>
        <dbReference type="ChEBI" id="CHEBI:29035"/>
        <label>1</label>
    </ligand>
</feature>
<feature type="binding site" evidence="1">
    <location>
        <position position="10"/>
    </location>
    <ligand>
        <name>Mn(2+)</name>
        <dbReference type="ChEBI" id="CHEBI:29035"/>
        <label>1</label>
    </ligand>
</feature>
<feature type="binding site" evidence="1">
    <location>
        <position position="41"/>
    </location>
    <ligand>
        <name>Mn(2+)</name>
        <dbReference type="ChEBI" id="CHEBI:29035"/>
        <label>1</label>
    </ligand>
</feature>
<feature type="binding site" evidence="1">
    <location>
        <position position="41"/>
    </location>
    <ligand>
        <name>Mn(2+)</name>
        <dbReference type="ChEBI" id="CHEBI:29035"/>
        <label>2</label>
    </ligand>
</feature>
<feature type="binding site" evidence="1">
    <location>
        <begin position="79"/>
        <end position="80"/>
    </location>
    <ligand>
        <name>substrate</name>
    </ligand>
</feature>
<feature type="binding site" evidence="1">
    <location>
        <position position="79"/>
    </location>
    <ligand>
        <name>Mn(2+)</name>
        <dbReference type="ChEBI" id="CHEBI:29035"/>
        <label>2</label>
    </ligand>
</feature>
<feature type="binding site" evidence="1">
    <location>
        <position position="114"/>
    </location>
    <ligand>
        <name>Mn(2+)</name>
        <dbReference type="ChEBI" id="CHEBI:29035"/>
        <label>2</label>
    </ligand>
</feature>
<feature type="binding site" evidence="1">
    <location>
        <position position="122"/>
    </location>
    <ligand>
        <name>substrate</name>
    </ligand>
</feature>
<feature type="binding site" evidence="1">
    <location>
        <position position="160"/>
    </location>
    <ligand>
        <name>substrate</name>
    </ligand>
</feature>
<feature type="binding site" evidence="1">
    <location>
        <position position="164"/>
    </location>
    <ligand>
        <name>substrate</name>
    </ligand>
</feature>
<feature type="binding site" evidence="1">
    <location>
        <position position="167"/>
    </location>
    <ligand>
        <name>substrate</name>
    </ligand>
</feature>
<feature type="binding site" evidence="1">
    <location>
        <position position="195"/>
    </location>
    <ligand>
        <name>Mn(2+)</name>
        <dbReference type="ChEBI" id="CHEBI:29035"/>
        <label>2</label>
    </ligand>
</feature>
<feature type="binding site" evidence="1">
    <location>
        <position position="195"/>
    </location>
    <ligand>
        <name>substrate</name>
    </ligand>
</feature>
<feature type="binding site" evidence="1">
    <location>
        <position position="197"/>
    </location>
    <ligand>
        <name>Mn(2+)</name>
        <dbReference type="ChEBI" id="CHEBI:29035"/>
        <label>1</label>
    </ligand>
</feature>
<organism>
    <name type="scientific">Salmonella choleraesuis (strain SC-B67)</name>
    <dbReference type="NCBI Taxonomy" id="321314"/>
    <lineage>
        <taxon>Bacteria</taxon>
        <taxon>Pseudomonadati</taxon>
        <taxon>Pseudomonadota</taxon>
        <taxon>Gammaproteobacteria</taxon>
        <taxon>Enterobacterales</taxon>
        <taxon>Enterobacteriaceae</taxon>
        <taxon>Salmonella</taxon>
    </lineage>
</organism>
<sequence>MATLFIADLHLQTEEPAIVAGFLRFLAVEARQADALYILGDLFEAWIGDDDPNPLHREMAVAIKSLVDSGVPCFFIHGNRDFLIGKRFARESGMILLPQEKVLDLYGRNVLIMHGDTLCTDDAGYQAFRAKVHNPWVQRLFLTLPLFIRRRIAARMRAGSKAANSSKSLDIMDVNAQTVVAEMEKHRVQWLVHGHTHRPAVHELSVNDQPAFRVVLGAWHHEGSMVKVTPDNVELIAFPL</sequence>
<keyword id="KW-0997">Cell inner membrane</keyword>
<keyword id="KW-1003">Cell membrane</keyword>
<keyword id="KW-0378">Hydrolase</keyword>
<keyword id="KW-0441">Lipid A biosynthesis</keyword>
<keyword id="KW-0444">Lipid biosynthesis</keyword>
<keyword id="KW-0443">Lipid metabolism</keyword>
<keyword id="KW-0464">Manganese</keyword>
<keyword id="KW-0472">Membrane</keyword>
<keyword id="KW-0479">Metal-binding</keyword>